<reference key="1">
    <citation type="journal article" date="1999" name="Nature">
        <title>Vertebrate Hedgehog signalling modulated by induction of a Hedgehog-binding protein.</title>
        <authorList>
            <person name="Chuang P.-T."/>
            <person name="McMahon A.P."/>
        </authorList>
    </citation>
    <scope>NUCLEOTIDE SEQUENCE [MRNA]</scope>
    <scope>SUBCELLULAR LOCATION</scope>
    <scope>INTERACTION WITH SHH; IHH AND DHH</scope>
    <scope>DEVELOPMENTAL STAGE</scope>
</reference>
<reference key="2">
    <citation type="journal article" date="2005" name="Science">
        <title>The transcriptional landscape of the mammalian genome.</title>
        <authorList>
            <person name="Carninci P."/>
            <person name="Kasukawa T."/>
            <person name="Katayama S."/>
            <person name="Gough J."/>
            <person name="Frith M.C."/>
            <person name="Maeda N."/>
            <person name="Oyama R."/>
            <person name="Ravasi T."/>
            <person name="Lenhard B."/>
            <person name="Wells C."/>
            <person name="Kodzius R."/>
            <person name="Shimokawa K."/>
            <person name="Bajic V.B."/>
            <person name="Brenner S.E."/>
            <person name="Batalov S."/>
            <person name="Forrest A.R."/>
            <person name="Zavolan M."/>
            <person name="Davis M.J."/>
            <person name="Wilming L.G."/>
            <person name="Aidinis V."/>
            <person name="Allen J.E."/>
            <person name="Ambesi-Impiombato A."/>
            <person name="Apweiler R."/>
            <person name="Aturaliya R.N."/>
            <person name="Bailey T.L."/>
            <person name="Bansal M."/>
            <person name="Baxter L."/>
            <person name="Beisel K.W."/>
            <person name="Bersano T."/>
            <person name="Bono H."/>
            <person name="Chalk A.M."/>
            <person name="Chiu K.P."/>
            <person name="Choudhary V."/>
            <person name="Christoffels A."/>
            <person name="Clutterbuck D.R."/>
            <person name="Crowe M.L."/>
            <person name="Dalla E."/>
            <person name="Dalrymple B.P."/>
            <person name="de Bono B."/>
            <person name="Della Gatta G."/>
            <person name="di Bernardo D."/>
            <person name="Down T."/>
            <person name="Engstrom P."/>
            <person name="Fagiolini M."/>
            <person name="Faulkner G."/>
            <person name="Fletcher C.F."/>
            <person name="Fukushima T."/>
            <person name="Furuno M."/>
            <person name="Futaki S."/>
            <person name="Gariboldi M."/>
            <person name="Georgii-Hemming P."/>
            <person name="Gingeras T.R."/>
            <person name="Gojobori T."/>
            <person name="Green R.E."/>
            <person name="Gustincich S."/>
            <person name="Harbers M."/>
            <person name="Hayashi Y."/>
            <person name="Hensch T.K."/>
            <person name="Hirokawa N."/>
            <person name="Hill D."/>
            <person name="Huminiecki L."/>
            <person name="Iacono M."/>
            <person name="Ikeo K."/>
            <person name="Iwama A."/>
            <person name="Ishikawa T."/>
            <person name="Jakt M."/>
            <person name="Kanapin A."/>
            <person name="Katoh M."/>
            <person name="Kawasawa Y."/>
            <person name="Kelso J."/>
            <person name="Kitamura H."/>
            <person name="Kitano H."/>
            <person name="Kollias G."/>
            <person name="Krishnan S.P."/>
            <person name="Kruger A."/>
            <person name="Kummerfeld S.K."/>
            <person name="Kurochkin I.V."/>
            <person name="Lareau L.F."/>
            <person name="Lazarevic D."/>
            <person name="Lipovich L."/>
            <person name="Liu J."/>
            <person name="Liuni S."/>
            <person name="McWilliam S."/>
            <person name="Madan Babu M."/>
            <person name="Madera M."/>
            <person name="Marchionni L."/>
            <person name="Matsuda H."/>
            <person name="Matsuzawa S."/>
            <person name="Miki H."/>
            <person name="Mignone F."/>
            <person name="Miyake S."/>
            <person name="Morris K."/>
            <person name="Mottagui-Tabar S."/>
            <person name="Mulder N."/>
            <person name="Nakano N."/>
            <person name="Nakauchi H."/>
            <person name="Ng P."/>
            <person name="Nilsson R."/>
            <person name="Nishiguchi S."/>
            <person name="Nishikawa S."/>
            <person name="Nori F."/>
            <person name="Ohara O."/>
            <person name="Okazaki Y."/>
            <person name="Orlando V."/>
            <person name="Pang K.C."/>
            <person name="Pavan W.J."/>
            <person name="Pavesi G."/>
            <person name="Pesole G."/>
            <person name="Petrovsky N."/>
            <person name="Piazza S."/>
            <person name="Reed J."/>
            <person name="Reid J.F."/>
            <person name="Ring B.Z."/>
            <person name="Ringwald M."/>
            <person name="Rost B."/>
            <person name="Ruan Y."/>
            <person name="Salzberg S.L."/>
            <person name="Sandelin A."/>
            <person name="Schneider C."/>
            <person name="Schoenbach C."/>
            <person name="Sekiguchi K."/>
            <person name="Semple C.A."/>
            <person name="Seno S."/>
            <person name="Sessa L."/>
            <person name="Sheng Y."/>
            <person name="Shibata Y."/>
            <person name="Shimada H."/>
            <person name="Shimada K."/>
            <person name="Silva D."/>
            <person name="Sinclair B."/>
            <person name="Sperling S."/>
            <person name="Stupka E."/>
            <person name="Sugiura K."/>
            <person name="Sultana R."/>
            <person name="Takenaka Y."/>
            <person name="Taki K."/>
            <person name="Tammoja K."/>
            <person name="Tan S.L."/>
            <person name="Tang S."/>
            <person name="Taylor M.S."/>
            <person name="Tegner J."/>
            <person name="Teichmann S.A."/>
            <person name="Ueda H.R."/>
            <person name="van Nimwegen E."/>
            <person name="Verardo R."/>
            <person name="Wei C.L."/>
            <person name="Yagi K."/>
            <person name="Yamanishi H."/>
            <person name="Zabarovsky E."/>
            <person name="Zhu S."/>
            <person name="Zimmer A."/>
            <person name="Hide W."/>
            <person name="Bult C."/>
            <person name="Grimmond S.M."/>
            <person name="Teasdale R.D."/>
            <person name="Liu E.T."/>
            <person name="Brusic V."/>
            <person name="Quackenbush J."/>
            <person name="Wahlestedt C."/>
            <person name="Mattick J.S."/>
            <person name="Hume D.A."/>
            <person name="Kai C."/>
            <person name="Sasaki D."/>
            <person name="Tomaru Y."/>
            <person name="Fukuda S."/>
            <person name="Kanamori-Katayama M."/>
            <person name="Suzuki M."/>
            <person name="Aoki J."/>
            <person name="Arakawa T."/>
            <person name="Iida J."/>
            <person name="Imamura K."/>
            <person name="Itoh M."/>
            <person name="Kato T."/>
            <person name="Kawaji H."/>
            <person name="Kawagashira N."/>
            <person name="Kawashima T."/>
            <person name="Kojima M."/>
            <person name="Kondo S."/>
            <person name="Konno H."/>
            <person name="Nakano K."/>
            <person name="Ninomiya N."/>
            <person name="Nishio T."/>
            <person name="Okada M."/>
            <person name="Plessy C."/>
            <person name="Shibata K."/>
            <person name="Shiraki T."/>
            <person name="Suzuki S."/>
            <person name="Tagami M."/>
            <person name="Waki K."/>
            <person name="Watahiki A."/>
            <person name="Okamura-Oho Y."/>
            <person name="Suzuki H."/>
            <person name="Kawai J."/>
            <person name="Hayashizaki Y."/>
        </authorList>
    </citation>
    <scope>NUCLEOTIDE SEQUENCE [LARGE SCALE MRNA]</scope>
    <source>
        <strain>C57BL/6J</strain>
        <tissue>Medulla oblongata</tissue>
    </source>
</reference>
<reference key="3">
    <citation type="journal article" date="2004" name="Genome Res.">
        <title>The status, quality, and expansion of the NIH full-length cDNA project: the Mammalian Gene Collection (MGC).</title>
        <authorList>
            <consortium name="The MGC Project Team"/>
        </authorList>
    </citation>
    <scope>NUCLEOTIDE SEQUENCE [LARGE SCALE MRNA]</scope>
    <source>
        <strain>C57BL/6J</strain>
        <tissue>Embryonic brain</tissue>
    </source>
</reference>
<reference key="4">
    <citation type="journal article" date="2004" name="Mol. Cell. Neurosci.">
        <title>Hedgehog interacting protein in the mature brain: membrane-associated and soluble forms.</title>
        <authorList>
            <person name="Coulombe J."/>
            <person name="Traiffort E."/>
            <person name="Loulier K."/>
            <person name="Faure H."/>
            <person name="Ruat M."/>
        </authorList>
    </citation>
    <scope>TISSUE SPECIFICITY</scope>
    <scope>IDENTIFICATION OF SOLUBLE FORMS</scope>
</reference>
<accession>Q7TN16</accession>
<accession>Q8C0B0</accession>
<accession>Q9WU59</accession>
<evidence type="ECO:0000250" key="1"/>
<evidence type="ECO:0000255" key="2"/>
<evidence type="ECO:0000255" key="3">
    <source>
        <dbReference type="PROSITE-ProRule" id="PRU00076"/>
    </source>
</evidence>
<evidence type="ECO:0000269" key="4">
    <source>
    </source>
</evidence>
<evidence type="ECO:0000269" key="5">
    <source>
    </source>
</evidence>
<evidence type="ECO:0000305" key="6"/>
<gene>
    <name type="primary">Hhip</name>
    <name type="synonym">Hip</name>
</gene>
<proteinExistence type="evidence at protein level"/>
<protein>
    <recommendedName>
        <fullName>Hedgehog-interacting protein</fullName>
        <shortName>HHIP</shortName>
        <shortName>HIP</shortName>
    </recommendedName>
</protein>
<dbReference type="EMBL" id="AF116865">
    <property type="protein sequence ID" value="AAD31172.1"/>
    <property type="molecule type" value="mRNA"/>
</dbReference>
<dbReference type="EMBL" id="AK031841">
    <property type="protein sequence ID" value="BAC27575.1"/>
    <property type="molecule type" value="mRNA"/>
</dbReference>
<dbReference type="EMBL" id="BC053012">
    <property type="protein sequence ID" value="AAH53012.1"/>
    <property type="molecule type" value="mRNA"/>
</dbReference>
<dbReference type="CCDS" id="CCDS22440.1"/>
<dbReference type="RefSeq" id="NP_064655.4">
    <property type="nucleotide sequence ID" value="NM_020259.4"/>
</dbReference>
<dbReference type="SMR" id="Q7TN16"/>
<dbReference type="BioGRID" id="200300">
    <property type="interactions" value="2"/>
</dbReference>
<dbReference type="FunCoup" id="Q7TN16">
    <property type="interactions" value="1052"/>
</dbReference>
<dbReference type="STRING" id="10090.ENSMUSP00000078047"/>
<dbReference type="GlyCosmos" id="Q7TN16">
    <property type="glycosylation" value="4 sites, No reported glycans"/>
</dbReference>
<dbReference type="GlyGen" id="Q7TN16">
    <property type="glycosylation" value="5 sites, 2 N-linked glycans (3 sites)"/>
</dbReference>
<dbReference type="PhosphoSitePlus" id="Q7TN16"/>
<dbReference type="jPOST" id="Q7TN16"/>
<dbReference type="PaxDb" id="10090-ENSMUSP00000078047"/>
<dbReference type="ProteomicsDB" id="269789"/>
<dbReference type="Antibodypedia" id="2783">
    <property type="antibodies" value="245 antibodies from 29 providers"/>
</dbReference>
<dbReference type="DNASU" id="15245"/>
<dbReference type="Ensembl" id="ENSMUST00000079038.4">
    <property type="protein sequence ID" value="ENSMUSP00000078047.3"/>
    <property type="gene ID" value="ENSMUSG00000064325.5"/>
</dbReference>
<dbReference type="GeneID" id="15245"/>
<dbReference type="KEGG" id="mmu:15245"/>
<dbReference type="UCSC" id="uc009mix.2">
    <property type="organism name" value="mouse"/>
</dbReference>
<dbReference type="AGR" id="MGI:1341847"/>
<dbReference type="CTD" id="64399"/>
<dbReference type="MGI" id="MGI:1341847">
    <property type="gene designation" value="Hhip"/>
</dbReference>
<dbReference type="VEuPathDB" id="HostDB:ENSMUSG00000064325"/>
<dbReference type="eggNOG" id="KOG4295">
    <property type="taxonomic scope" value="Eukaryota"/>
</dbReference>
<dbReference type="GeneTree" id="ENSGT00940000158660"/>
<dbReference type="HOGENOM" id="CLU_012344_0_0_1"/>
<dbReference type="InParanoid" id="Q7TN16"/>
<dbReference type="OMA" id="RMPHREP"/>
<dbReference type="OrthoDB" id="10266706at2759"/>
<dbReference type="PhylomeDB" id="Q7TN16"/>
<dbReference type="TreeFam" id="TF329059"/>
<dbReference type="Reactome" id="R-MMU-5632681">
    <property type="pathway name" value="Ligand-receptor interactions"/>
</dbReference>
<dbReference type="BioGRID-ORCS" id="15245">
    <property type="hits" value="0 hits in 77 CRISPR screens"/>
</dbReference>
<dbReference type="ChiTaRS" id="Hhip">
    <property type="organism name" value="mouse"/>
</dbReference>
<dbReference type="PRO" id="PR:Q7TN16"/>
<dbReference type="Proteomes" id="UP000000589">
    <property type="component" value="Chromosome 8"/>
</dbReference>
<dbReference type="RNAct" id="Q7TN16">
    <property type="molecule type" value="protein"/>
</dbReference>
<dbReference type="Bgee" id="ENSMUSG00000064325">
    <property type="expression patterns" value="Expressed in left lung lobe and 156 other cell types or tissues"/>
</dbReference>
<dbReference type="GO" id="GO:0009986">
    <property type="term" value="C:cell surface"/>
    <property type="evidence" value="ECO:0000314"/>
    <property type="project" value="MGI"/>
</dbReference>
<dbReference type="GO" id="GO:0005576">
    <property type="term" value="C:extracellular region"/>
    <property type="evidence" value="ECO:0007669"/>
    <property type="project" value="UniProtKB-SubCell"/>
</dbReference>
<dbReference type="GO" id="GO:0005886">
    <property type="term" value="C:plasma membrane"/>
    <property type="evidence" value="ECO:0000314"/>
    <property type="project" value="MGI"/>
</dbReference>
<dbReference type="GO" id="GO:0097108">
    <property type="term" value="F:hedgehog family protein binding"/>
    <property type="evidence" value="ECO:0007669"/>
    <property type="project" value="Ensembl"/>
</dbReference>
<dbReference type="GO" id="GO:0008270">
    <property type="term" value="F:zinc ion binding"/>
    <property type="evidence" value="ECO:0000250"/>
    <property type="project" value="UniProtKB"/>
</dbReference>
<dbReference type="GO" id="GO:0009887">
    <property type="term" value="P:animal organ morphogenesis"/>
    <property type="evidence" value="ECO:0000315"/>
    <property type="project" value="MGI"/>
</dbReference>
<dbReference type="GO" id="GO:0009953">
    <property type="term" value="P:dorsal/ventral pattern formation"/>
    <property type="evidence" value="ECO:0000316"/>
    <property type="project" value="MGI"/>
</dbReference>
<dbReference type="GO" id="GO:0060441">
    <property type="term" value="P:epithelial tube branching involved in lung morphogenesis"/>
    <property type="evidence" value="ECO:0000315"/>
    <property type="project" value="MGI"/>
</dbReference>
<dbReference type="GO" id="GO:0016525">
    <property type="term" value="P:negative regulation of angiogenesis"/>
    <property type="evidence" value="ECO:0000303"/>
    <property type="project" value="BHF-UCL"/>
</dbReference>
<dbReference type="GO" id="GO:0009968">
    <property type="term" value="P:negative regulation of signal transduction"/>
    <property type="evidence" value="ECO:0000250"/>
    <property type="project" value="UniProtKB"/>
</dbReference>
<dbReference type="GO" id="GO:0045879">
    <property type="term" value="P:negative regulation of smoothened signaling pathway"/>
    <property type="evidence" value="ECO:0000314"/>
    <property type="project" value="BHF-UCL"/>
</dbReference>
<dbReference type="GO" id="GO:0007405">
    <property type="term" value="P:neuroblast proliferation"/>
    <property type="evidence" value="ECO:0000316"/>
    <property type="project" value="MGI"/>
</dbReference>
<dbReference type="GO" id="GO:0040036">
    <property type="term" value="P:regulation of fibroblast growth factor receptor signaling pathway"/>
    <property type="evidence" value="ECO:0000315"/>
    <property type="project" value="MGI"/>
</dbReference>
<dbReference type="GO" id="GO:0007165">
    <property type="term" value="P:signal transduction"/>
    <property type="evidence" value="ECO:0000314"/>
    <property type="project" value="MGI"/>
</dbReference>
<dbReference type="GO" id="GO:0048705">
    <property type="term" value="P:skeletal system morphogenesis"/>
    <property type="evidence" value="ECO:0000315"/>
    <property type="project" value="BHF-UCL"/>
</dbReference>
<dbReference type="FunFam" id="2.120.10.30:FF:000026">
    <property type="entry name" value="hedgehog-interacting protein-like isoform X1"/>
    <property type="match status" value="1"/>
</dbReference>
<dbReference type="FunFam" id="2.10.25.10:FF:000020">
    <property type="entry name" value="Latent-transforming growth factor beta-binding protein 1"/>
    <property type="match status" value="1"/>
</dbReference>
<dbReference type="Gene3D" id="2.10.25.10">
    <property type="entry name" value="Laminin"/>
    <property type="match status" value="2"/>
</dbReference>
<dbReference type="Gene3D" id="2.120.10.30">
    <property type="entry name" value="TolB, C-terminal domain"/>
    <property type="match status" value="1"/>
</dbReference>
<dbReference type="InterPro" id="IPR011042">
    <property type="entry name" value="6-blade_b-propeller_TolB-like"/>
</dbReference>
<dbReference type="InterPro" id="IPR000742">
    <property type="entry name" value="EGF-like_dom"/>
</dbReference>
<dbReference type="InterPro" id="IPR013111">
    <property type="entry name" value="EGF_extracell"/>
</dbReference>
<dbReference type="InterPro" id="IPR018143">
    <property type="entry name" value="Folate_rcpt-like"/>
</dbReference>
<dbReference type="InterPro" id="IPR012938">
    <property type="entry name" value="Glc/Sorbosone_DH"/>
</dbReference>
<dbReference type="InterPro" id="IPR011041">
    <property type="entry name" value="Quinoprot_gluc/sorb_DH_b-prop"/>
</dbReference>
<dbReference type="PANTHER" id="PTHR19328">
    <property type="entry name" value="HEDGEHOG-INTERACTING PROTEIN"/>
    <property type="match status" value="1"/>
</dbReference>
<dbReference type="PANTHER" id="PTHR19328:SF27">
    <property type="entry name" value="HEDGEHOG-INTERACTING PROTEIN"/>
    <property type="match status" value="1"/>
</dbReference>
<dbReference type="Pfam" id="PF07974">
    <property type="entry name" value="EGF_2"/>
    <property type="match status" value="1"/>
</dbReference>
<dbReference type="Pfam" id="PF03024">
    <property type="entry name" value="Folate_rec"/>
    <property type="match status" value="1"/>
</dbReference>
<dbReference type="Pfam" id="PF07995">
    <property type="entry name" value="GSDH"/>
    <property type="match status" value="1"/>
</dbReference>
<dbReference type="SMART" id="SM00181">
    <property type="entry name" value="EGF"/>
    <property type="match status" value="2"/>
</dbReference>
<dbReference type="SUPFAM" id="SSF50952">
    <property type="entry name" value="Soluble quinoprotein glucose dehydrogenase"/>
    <property type="match status" value="1"/>
</dbReference>
<dbReference type="PROSITE" id="PS00022">
    <property type="entry name" value="EGF_1"/>
    <property type="match status" value="2"/>
</dbReference>
<dbReference type="PROSITE" id="PS01186">
    <property type="entry name" value="EGF_2"/>
    <property type="match status" value="2"/>
</dbReference>
<dbReference type="PROSITE" id="PS50026">
    <property type="entry name" value="EGF_3"/>
    <property type="match status" value="1"/>
</dbReference>
<comment type="function">
    <text>Modulates hedgehog signaling in several cell types, including brain and lung through direct interaction with members of the hedgehog family. Soluble forms inhibit Shh-induced differentiation in the fibroblast cell line C3H/10T1/2.</text>
</comment>
<comment type="subunit">
    <text evidence="4">Interacts with all three hedgehog family members, SHH, IHH and DHH.</text>
</comment>
<comment type="subcellular location">
    <subcellularLocation>
        <location evidence="4">Cell membrane</location>
        <topology evidence="4">Peripheral membrane protein</topology>
    </subcellularLocation>
    <subcellularLocation>
        <location evidence="4">Secreted</location>
    </subcellularLocation>
    <text>The last 22 C-terminal amino acids may participate in cell membrane attachment.</text>
</comment>
<comment type="tissue specificity">
    <text evidence="5">In the adult brain, high expression found in the ventral cochlear nucleus, medial habenula, indusium griseum and tenia tecta. Some expression also in the caudate putamen, the nucleus accumbens, the ventral pallidum and in the superficial layers of the superior colliculus.</text>
</comment>
<comment type="developmental stage">
    <text evidence="4">First detected at 8.75 dpc, in the ventral midline of the neural tube and in the ventral medial somites. At 10.5 dpc, expression in the notochord is maintained in the caudal region. Expression is lost in the floor plate, but is retained in the ventral half of the neural tube and in the sclerotome of the adjacent somites. In the midbrain, expression confined to two lateral stripes adjacent to the floor plate. Also expressed in the gut mesenchyme along the length of the gastro-intestinal tract and in the mesenchyme of the posterior half of the limb. Expressed in the underlying mesenchyme of the epithelium of a number of tissues including lung, gut and whisker. Also expressed in the perichondrium and in the androgen-producing interstitial somatic cells of the developing testis.</text>
</comment>
<comment type="domain">
    <text evidence="1">A flexible loop interacts with the SHH zinc binding site and contributes to zinc binding.</text>
</comment>
<comment type="similarity">
    <text evidence="6">Belongs to the HHIP family.</text>
</comment>
<organism>
    <name type="scientific">Mus musculus</name>
    <name type="common">Mouse</name>
    <dbReference type="NCBI Taxonomy" id="10090"/>
    <lineage>
        <taxon>Eukaryota</taxon>
        <taxon>Metazoa</taxon>
        <taxon>Chordata</taxon>
        <taxon>Craniata</taxon>
        <taxon>Vertebrata</taxon>
        <taxon>Euteleostomi</taxon>
        <taxon>Mammalia</taxon>
        <taxon>Eutheria</taxon>
        <taxon>Euarchontoglires</taxon>
        <taxon>Glires</taxon>
        <taxon>Rodentia</taxon>
        <taxon>Myomorpha</taxon>
        <taxon>Muroidea</taxon>
        <taxon>Muridae</taxon>
        <taxon>Murinae</taxon>
        <taxon>Mus</taxon>
        <taxon>Mus</taxon>
    </lineage>
</organism>
<sequence length="700" mass="78513">MLKMLSFKLLLLAVALGFFEGDAKFGERNEGSGARRRRCLNGNPPKRLKRRDRRVMSQLELLSGGEILCGGFYPRVSCCLQSDSPGLGRLENKIFSATNNSECSRLLEEIQCAPCSPHSQSLFYTPERDVLDGDLALPLLCKDYCKEFFYTCRGHIPGLLQTTADEFCFYYARKDAGLCFPDFPRKQVRGPASNYLGQMEDYEKVGGISRKHKHNCLCVQEVMSGLRQPVSAVHSGDGSHRLFILEKEGYVKILTPEGELFKEPYLDIHKLVQSGIKGGDERGLLSLAFHPNYKKNGKLYVSYTTNQERWAIGPHDHILRVVEYTVSRKNPHQVDVRTARVFLEVAELHRKHLGGQLLFGPDGFLYIILGDGMITLDDMEEMDGLSDFTGSVLRLDVDTDMCNVPYSIPRSNPHFNSTNQPPEVFAHGLHDPGRCAVDRHPTDININLTILCSDSNGKNRSSARILQIIKGRDYESEPSLLEFKPFSNGPLVGGFVYRGCQSERLYGSYVFGDRNGNFLTLQQSPVTKQWQEKPLCLGASSSCRGYFSGHILGFGEDELGEVYILSSSKSMTQTHNGKLYKIVDPKRPLMPEECRVTVQPAQPLTSDCSRLCRNGYYTPTGKCCCSPGWEGDFCRIAKCEPACRHGGVCVRPNKCLCKKGYLGPQCEQVDRNVRRVTRAGILDQIIDMTSYLLDLTSYIV</sequence>
<keyword id="KW-1003">Cell membrane</keyword>
<keyword id="KW-1015">Disulfide bond</keyword>
<keyword id="KW-0245">EGF-like domain</keyword>
<keyword id="KW-0325">Glycoprotein</keyword>
<keyword id="KW-0472">Membrane</keyword>
<keyword id="KW-0479">Metal-binding</keyword>
<keyword id="KW-1185">Reference proteome</keyword>
<keyword id="KW-0677">Repeat</keyword>
<keyword id="KW-0964">Secreted</keyword>
<keyword id="KW-0732">Signal</keyword>
<keyword id="KW-0862">Zinc</keyword>
<name>HHIP_MOUSE</name>
<feature type="signal peptide" evidence="2">
    <location>
        <begin position="1"/>
        <end position="17"/>
    </location>
</feature>
<feature type="chain" id="PRO_0000007624" description="Hedgehog-interacting protein">
    <location>
        <begin position="18"/>
        <end position="700"/>
    </location>
</feature>
<feature type="domain" description="EGF-like 1" evidence="3">
    <location>
        <begin position="607"/>
        <end position="634"/>
    </location>
</feature>
<feature type="domain" description="EGF-like 2" evidence="3">
    <location>
        <begin position="635"/>
        <end position="667"/>
    </location>
</feature>
<feature type="region of interest" description="Interaction with SHH zinc binding site" evidence="1">
    <location>
        <begin position="376"/>
        <end position="388"/>
    </location>
</feature>
<feature type="binding site" evidence="1">
    <location>
        <position position="383"/>
    </location>
    <ligand>
        <name>Zn(2+)</name>
        <dbReference type="ChEBI" id="CHEBI:29105"/>
        <note>ligand shared with SHH</note>
    </ligand>
</feature>
<feature type="glycosylation site" description="N-linked (GlcNAc...) asparagine" evidence="2">
    <location>
        <position position="99"/>
    </location>
</feature>
<feature type="glycosylation site" description="N-linked (GlcNAc...) asparagine" evidence="2">
    <location>
        <position position="416"/>
    </location>
</feature>
<feature type="glycosylation site" description="N-linked (GlcNAc...) asparagine" evidence="2">
    <location>
        <position position="447"/>
    </location>
</feature>
<feature type="glycosylation site" description="N-linked (GlcNAc...) asparagine" evidence="2">
    <location>
        <position position="459"/>
    </location>
</feature>
<feature type="disulfide bond" evidence="3">
    <location>
        <begin position="216"/>
        <end position="536"/>
    </location>
</feature>
<feature type="disulfide bond" evidence="3">
    <location>
        <begin position="218"/>
        <end position="543"/>
    </location>
</feature>
<feature type="disulfide bond" evidence="3">
    <location>
        <begin position="402"/>
        <end position="624"/>
    </location>
</feature>
<feature type="disulfide bond" evidence="3">
    <location>
        <begin position="435"/>
        <end position="452"/>
    </location>
</feature>
<feature type="disulfide bond" evidence="3">
    <location>
        <begin position="500"/>
        <end position="594"/>
    </location>
</feature>
<feature type="disulfide bond" evidence="3">
    <location>
        <begin position="612"/>
        <end position="623"/>
    </location>
</feature>
<feature type="disulfide bond" evidence="3">
    <location>
        <begin position="625"/>
        <end position="634"/>
    </location>
</feature>
<feature type="disulfide bond" evidence="3">
    <location>
        <begin position="639"/>
        <end position="649"/>
    </location>
</feature>
<feature type="disulfide bond" evidence="3">
    <location>
        <begin position="643"/>
        <end position="655"/>
    </location>
</feature>
<feature type="disulfide bond" evidence="3">
    <location>
        <begin position="657"/>
        <end position="666"/>
    </location>
</feature>
<feature type="sequence conflict" description="In Ref. 1; AAD31172." evidence="6" ref="1">
    <original>N</original>
    <variation>S</variation>
    <location>
        <position position="29"/>
    </location>
</feature>
<feature type="sequence conflict" description="In Ref. 3; AAH53012." evidence="6" ref="3">
    <original>D</original>
    <variation>G</variation>
    <location>
        <position position="473"/>
    </location>
</feature>
<feature type="sequence conflict" description="In Ref. 2; BAC27575." evidence="6" ref="2">
    <original>D</original>
    <variation>V</variation>
    <location>
        <position position="607"/>
    </location>
</feature>